<protein>
    <recommendedName>
        <fullName evidence="9">Cation channel sperm-associated auxiliary subunit zeta</fullName>
        <shortName evidence="7">CatSper-zeta</shortName>
        <shortName evidence="7">CatSperzeta</shortName>
    </recommendedName>
    <alternativeName>
        <fullName evidence="6">Protein expressed in male leptotene and zygotene spermatocytes 622</fullName>
        <shortName evidence="6">MLZ-622</shortName>
    </alternativeName>
    <alternativeName>
        <fullName>Testis-expressed protein 40</fullName>
    </alternativeName>
</protein>
<evidence type="ECO:0000250" key="1">
    <source>
        <dbReference type="UniProtKB" id="Q91ZR5"/>
    </source>
</evidence>
<evidence type="ECO:0000269" key="2">
    <source>
    </source>
</evidence>
<evidence type="ECO:0000269" key="3">
    <source>
    </source>
</evidence>
<evidence type="ECO:0000269" key="4">
    <source>
    </source>
</evidence>
<evidence type="ECO:0000269" key="5">
    <source>
    </source>
</evidence>
<evidence type="ECO:0000303" key="6">
    <source>
    </source>
</evidence>
<evidence type="ECO:0000303" key="7">
    <source>
    </source>
</evidence>
<evidence type="ECO:0000305" key="8"/>
<evidence type="ECO:0000312" key="9">
    <source>
        <dbReference type="MGI" id="MGI:1914327"/>
    </source>
</evidence>
<evidence type="ECO:0007829" key="10">
    <source>
        <dbReference type="PDB" id="7EEB"/>
    </source>
</evidence>
<accession>Q9CQP8</accession>
<accession>Q9DAA2</accession>
<accession>Q9DAP8</accession>
<keyword id="KW-0002">3D-structure</keyword>
<keyword id="KW-1003">Cell membrane</keyword>
<keyword id="KW-0966">Cell projection</keyword>
<keyword id="KW-0969">Cilium</keyword>
<keyword id="KW-0221">Differentiation</keyword>
<keyword id="KW-0282">Flagellum</keyword>
<keyword id="KW-0472">Membrane</keyword>
<keyword id="KW-1185">Reference proteome</keyword>
<keyword id="KW-0744">Spermatogenesis</keyword>
<gene>
    <name evidence="7 9" type="primary">Catsperz</name>
    <name evidence="9" type="synonym">Tex40</name>
</gene>
<comment type="function">
    <text evidence="3 4 5">Auxiliary component of the CatSper complex, a complex involved in sperm cell hyperactivation (PubMed:28226241, PubMed:31056283, PubMed:34225353). Sperm cell hyperactivation is needed for sperm motility which is essential late in the preparation of sperm for fertilization (PubMed:28226241, PubMed:31056283). Required for a distribution of the CatSper complex in linear quadrilateral nanodomains along the flagellum, maximizing fertilization inside the mammalian female reproductive tract (PubMed:28226241). Together with EFCAB9, associates with the CatSper channel pore and is required for the two-row structure of each single CatSper channel (PubMed:31056283).</text>
</comment>
<comment type="subunit">
    <text evidence="1 3 4 5 8">Component of the CatSper complex or CatSpermasome composed of the core pore-forming members CATSPER1, CATSPER2, CATSPER3 and CATSPER4 as well as auxiliary members CATSPERB, CATSPERG2, CATSPERD, CATSPERE, CATSPERZ, C2CD6/CATSPERT, SLCO6C1, TMEM249, TMEM262 and EFCAB9 (PubMed:28226241, PubMed:34225353). HSPA1 may be an additional auxiliary complex member (By similarity). The core complex members CATSPER1, CATSPER2, CATSPER3 and CATSPER4 form a heterotetrameric channel (PubMed:34225353). The auxiliary CATSPERB, CATSPERG2, CATSPERD and CATSPERE subunits form a pavilion-like structure over the pore which stabilizes the complex through interactions with CATSPER4, CATSPER3, CATSPER1 and CATSPER2 respectively (PubMed:34225353). SLCO6C1 interacts with CATSPERE and TMEM262/CATSPERH interacts with CATSPERB, further stabilizing the complex (PubMed:34225353). C2CD6/CATSPERT interacts at least with CATSPERD and is required for targeting the CatSper complex in the flagellar membrane (Probable). Interacts with EFCAB9; the interaction is direct, Ca(2+)-dependent and connects EFCAB9 with the CatSper complex (PubMed:31056283). Dissociates from EFCAB9 at elevated pH (PubMed:31056283).</text>
</comment>
<comment type="subcellular location">
    <subcellularLocation>
        <location evidence="3">Cell projection</location>
        <location evidence="3">Cilium</location>
        <location evidence="3">Flagellum membrane</location>
        <topology evidence="8">Peripheral membrane protein</topology>
    </subcellularLocation>
    <text evidence="3">Specifically located in the principal piece of sperm tail (PubMed:28226241). Although it does not contain a transmembrane domain, localizes with the CatSper complex at the flagellum membrane (PubMed:28226241).</text>
</comment>
<comment type="tissue specificity">
    <text evidence="2 3">Testis-specific (PubMed:20339383, PubMed:28226241). Expressed in adult but not in fetal testis (PubMed:20339383). Not expressed in ovary. Within testis, expression is restricted to spermatids (PubMed:20339383).</text>
</comment>
<comment type="disruption phenotype">
    <text evidence="3">Mice are normal but males show severe male subfertility. Mutant males display fragmented patterns of CatSper complex stripes in the tails of their sperm, leading to a reduction of calcium ions that pass through the channels to enter the cell. As consequence, the sperm tail is more rigid, preventing it from moving efficiently within the female. Mutant sperm are less able to penetrate the egg than normal sperm.</text>
</comment>
<reference key="1">
    <citation type="journal article" date="2005" name="Science">
        <title>The transcriptional landscape of the mammalian genome.</title>
        <authorList>
            <person name="Carninci P."/>
            <person name="Kasukawa T."/>
            <person name="Katayama S."/>
            <person name="Gough J."/>
            <person name="Frith M.C."/>
            <person name="Maeda N."/>
            <person name="Oyama R."/>
            <person name="Ravasi T."/>
            <person name="Lenhard B."/>
            <person name="Wells C."/>
            <person name="Kodzius R."/>
            <person name="Shimokawa K."/>
            <person name="Bajic V.B."/>
            <person name="Brenner S.E."/>
            <person name="Batalov S."/>
            <person name="Forrest A.R."/>
            <person name="Zavolan M."/>
            <person name="Davis M.J."/>
            <person name="Wilming L.G."/>
            <person name="Aidinis V."/>
            <person name="Allen J.E."/>
            <person name="Ambesi-Impiombato A."/>
            <person name="Apweiler R."/>
            <person name="Aturaliya R.N."/>
            <person name="Bailey T.L."/>
            <person name="Bansal M."/>
            <person name="Baxter L."/>
            <person name="Beisel K.W."/>
            <person name="Bersano T."/>
            <person name="Bono H."/>
            <person name="Chalk A.M."/>
            <person name="Chiu K.P."/>
            <person name="Choudhary V."/>
            <person name="Christoffels A."/>
            <person name="Clutterbuck D.R."/>
            <person name="Crowe M.L."/>
            <person name="Dalla E."/>
            <person name="Dalrymple B.P."/>
            <person name="de Bono B."/>
            <person name="Della Gatta G."/>
            <person name="di Bernardo D."/>
            <person name="Down T."/>
            <person name="Engstrom P."/>
            <person name="Fagiolini M."/>
            <person name="Faulkner G."/>
            <person name="Fletcher C.F."/>
            <person name="Fukushima T."/>
            <person name="Furuno M."/>
            <person name="Futaki S."/>
            <person name="Gariboldi M."/>
            <person name="Georgii-Hemming P."/>
            <person name="Gingeras T.R."/>
            <person name="Gojobori T."/>
            <person name="Green R.E."/>
            <person name="Gustincich S."/>
            <person name="Harbers M."/>
            <person name="Hayashi Y."/>
            <person name="Hensch T.K."/>
            <person name="Hirokawa N."/>
            <person name="Hill D."/>
            <person name="Huminiecki L."/>
            <person name="Iacono M."/>
            <person name="Ikeo K."/>
            <person name="Iwama A."/>
            <person name="Ishikawa T."/>
            <person name="Jakt M."/>
            <person name="Kanapin A."/>
            <person name="Katoh M."/>
            <person name="Kawasawa Y."/>
            <person name="Kelso J."/>
            <person name="Kitamura H."/>
            <person name="Kitano H."/>
            <person name="Kollias G."/>
            <person name="Krishnan S.P."/>
            <person name="Kruger A."/>
            <person name="Kummerfeld S.K."/>
            <person name="Kurochkin I.V."/>
            <person name="Lareau L.F."/>
            <person name="Lazarevic D."/>
            <person name="Lipovich L."/>
            <person name="Liu J."/>
            <person name="Liuni S."/>
            <person name="McWilliam S."/>
            <person name="Madan Babu M."/>
            <person name="Madera M."/>
            <person name="Marchionni L."/>
            <person name="Matsuda H."/>
            <person name="Matsuzawa S."/>
            <person name="Miki H."/>
            <person name="Mignone F."/>
            <person name="Miyake S."/>
            <person name="Morris K."/>
            <person name="Mottagui-Tabar S."/>
            <person name="Mulder N."/>
            <person name="Nakano N."/>
            <person name="Nakauchi H."/>
            <person name="Ng P."/>
            <person name="Nilsson R."/>
            <person name="Nishiguchi S."/>
            <person name="Nishikawa S."/>
            <person name="Nori F."/>
            <person name="Ohara O."/>
            <person name="Okazaki Y."/>
            <person name="Orlando V."/>
            <person name="Pang K.C."/>
            <person name="Pavan W.J."/>
            <person name="Pavesi G."/>
            <person name="Pesole G."/>
            <person name="Petrovsky N."/>
            <person name="Piazza S."/>
            <person name="Reed J."/>
            <person name="Reid J.F."/>
            <person name="Ring B.Z."/>
            <person name="Ringwald M."/>
            <person name="Rost B."/>
            <person name="Ruan Y."/>
            <person name="Salzberg S.L."/>
            <person name="Sandelin A."/>
            <person name="Schneider C."/>
            <person name="Schoenbach C."/>
            <person name="Sekiguchi K."/>
            <person name="Semple C.A."/>
            <person name="Seno S."/>
            <person name="Sessa L."/>
            <person name="Sheng Y."/>
            <person name="Shibata Y."/>
            <person name="Shimada H."/>
            <person name="Shimada K."/>
            <person name="Silva D."/>
            <person name="Sinclair B."/>
            <person name="Sperling S."/>
            <person name="Stupka E."/>
            <person name="Sugiura K."/>
            <person name="Sultana R."/>
            <person name="Takenaka Y."/>
            <person name="Taki K."/>
            <person name="Tammoja K."/>
            <person name="Tan S.L."/>
            <person name="Tang S."/>
            <person name="Taylor M.S."/>
            <person name="Tegner J."/>
            <person name="Teichmann S.A."/>
            <person name="Ueda H.R."/>
            <person name="van Nimwegen E."/>
            <person name="Verardo R."/>
            <person name="Wei C.L."/>
            <person name="Yagi K."/>
            <person name="Yamanishi H."/>
            <person name="Zabarovsky E."/>
            <person name="Zhu S."/>
            <person name="Zimmer A."/>
            <person name="Hide W."/>
            <person name="Bult C."/>
            <person name="Grimmond S.M."/>
            <person name="Teasdale R.D."/>
            <person name="Liu E.T."/>
            <person name="Brusic V."/>
            <person name="Quackenbush J."/>
            <person name="Wahlestedt C."/>
            <person name="Mattick J.S."/>
            <person name="Hume D.A."/>
            <person name="Kai C."/>
            <person name="Sasaki D."/>
            <person name="Tomaru Y."/>
            <person name="Fukuda S."/>
            <person name="Kanamori-Katayama M."/>
            <person name="Suzuki M."/>
            <person name="Aoki J."/>
            <person name="Arakawa T."/>
            <person name="Iida J."/>
            <person name="Imamura K."/>
            <person name="Itoh M."/>
            <person name="Kato T."/>
            <person name="Kawaji H."/>
            <person name="Kawagashira N."/>
            <person name="Kawashima T."/>
            <person name="Kojima M."/>
            <person name="Kondo S."/>
            <person name="Konno H."/>
            <person name="Nakano K."/>
            <person name="Ninomiya N."/>
            <person name="Nishio T."/>
            <person name="Okada M."/>
            <person name="Plessy C."/>
            <person name="Shibata K."/>
            <person name="Shiraki T."/>
            <person name="Suzuki S."/>
            <person name="Tagami M."/>
            <person name="Waki K."/>
            <person name="Watahiki A."/>
            <person name="Okamura-Oho Y."/>
            <person name="Suzuki H."/>
            <person name="Kawai J."/>
            <person name="Hayashizaki Y."/>
        </authorList>
    </citation>
    <scope>NUCLEOTIDE SEQUENCE [LARGE SCALE MRNA]</scope>
    <source>
        <strain>C57BL/6J</strain>
        <tissue>Testis</tissue>
    </source>
</reference>
<reference key="2">
    <citation type="journal article" date="2004" name="Genome Res.">
        <title>The status, quality, and expansion of the NIH full-length cDNA project: the Mammalian Gene Collection (MGC).</title>
        <authorList>
            <consortium name="The MGC Project Team"/>
        </authorList>
    </citation>
    <scope>NUCLEOTIDE SEQUENCE [LARGE SCALE MRNA]</scope>
    <source>
        <tissue>Testis</tissue>
    </source>
</reference>
<reference key="3">
    <citation type="journal article" date="2010" name="J. Hum. Genet.">
        <title>Screening of genes involved in chromosome segregation during meiosis I: toward the identification of genes responsible for infertility in humans.</title>
        <authorList>
            <person name="Kogo H."/>
            <person name="Kowa-Sugiyama H."/>
            <person name="Yamada K."/>
            <person name="Bolor H."/>
            <person name="Tsutsumi M."/>
            <person name="Ohye T."/>
            <person name="Inagaki H."/>
            <person name="Taniguchi M."/>
            <person name="Toda T."/>
            <person name="Kurahashi H."/>
        </authorList>
    </citation>
    <scope>TISSUE SPECIFICITY</scope>
</reference>
<reference key="4">
    <citation type="journal article" date="2017" name="Elife">
        <title>CatSperzeta regulates the structural continuity of sperm Ca(2+) signaling domains and is required for normal fertility.</title>
        <authorList>
            <person name="Chung J.J."/>
            <person name="Miki K."/>
            <person name="Kim D."/>
            <person name="Shim S.H."/>
            <person name="Shi H.F."/>
            <person name="Hwang J.Y."/>
            <person name="Cai X."/>
            <person name="Iseri Y."/>
            <person name="Zhuang X."/>
            <person name="Clapham D.E."/>
        </authorList>
    </citation>
    <scope>FUNCTION</scope>
    <scope>IDENTIFICATION BY MASS SPECTROMETRY</scope>
    <scope>IDENTIFICATION IN THE CATSPER COMPLEX</scope>
    <scope>SUBCELLULAR LOCATION</scope>
    <scope>TISSUE SPECIFICITY</scope>
    <scope>DISRUPTION PHENOTYPE</scope>
</reference>
<reference key="5">
    <citation type="journal article" date="2019" name="Cell">
        <title>Dual sensing of physiologic pH and calcium by EFCAB9 regulates sperm motility.</title>
        <authorList>
            <person name="Hwang J.Y."/>
            <person name="Mannowetz N."/>
            <person name="Zhang Y."/>
            <person name="Everley R.A."/>
            <person name="Gygi S.P."/>
            <person name="Bewersdorf J."/>
            <person name="Lishko P.V."/>
            <person name="Chung J.J."/>
        </authorList>
    </citation>
    <scope>FUNCTION</scope>
    <scope>INTERACTION WITH EFCAB9</scope>
</reference>
<reference key="6">
    <citation type="journal article" date="2021" name="Nature">
        <title>Structure of a mammalian sperm cation channel complex.</title>
        <authorList>
            <person name="Lin S."/>
            <person name="Ke M."/>
            <person name="Zhang Y."/>
            <person name="Yan Z."/>
            <person name="Wu J."/>
        </authorList>
    </citation>
    <scope>STRUCTURE BY ELECTRON MICROSCOPY (2.9 ANGSTROMS) OF THE CATSPER COMPLEX</scope>
    <scope>IDENTIFICATION BY MASS SPECTROMETRY</scope>
    <scope>FUNCTION</scope>
</reference>
<sequence length="194" mass="22741">MEESVKPVPKHANHRRSSVRSSLYGDVRDLWSTATMSTANVSVSDVCEDFDEEGKSVRNRIRKYSQTISIRDSLNLEPEEIQQQARRELELCHGRSLEHGEDHEESETSLASSTSESLIFSLWKPHRTYWTEQQNRLPLPLMELMETEVLDILKKALITYRSTIGRNHFMTKELQGYIEGIRKRRNKRLYFLDQ</sequence>
<feature type="chain" id="PRO_0000349323" description="Cation channel sperm-associated auxiliary subunit zeta">
    <location>
        <begin position="1"/>
        <end position="194"/>
    </location>
</feature>
<feature type="sequence conflict" description="In Ref. 1; BAB24164." evidence="8" ref="1">
    <original>K</original>
    <variation>Q</variation>
    <location>
        <position position="10"/>
    </location>
</feature>
<feature type="sequence conflict" description="In Ref. 1; BAB24375." evidence="8" ref="1">
    <original>R</original>
    <variation>G</variation>
    <location>
        <position position="86"/>
    </location>
</feature>
<feature type="sequence conflict" description="In Ref. 1; BAB24375." evidence="8" ref="1">
    <original>S</original>
    <variation>W</variation>
    <location>
        <position position="112"/>
    </location>
</feature>
<feature type="helix" evidence="10">
    <location>
        <begin position="43"/>
        <end position="46"/>
    </location>
</feature>
<feature type="helix" evidence="10">
    <location>
        <begin position="57"/>
        <end position="74"/>
    </location>
</feature>
<feature type="helix" evidence="10">
    <location>
        <begin position="78"/>
        <end position="93"/>
    </location>
</feature>
<feature type="helix" evidence="10">
    <location>
        <begin position="102"/>
        <end position="111"/>
    </location>
</feature>
<feature type="helix" evidence="10">
    <location>
        <begin position="113"/>
        <end position="134"/>
    </location>
</feature>
<feature type="helix" evidence="10">
    <location>
        <begin position="140"/>
        <end position="161"/>
    </location>
</feature>
<feature type="helix" evidence="10">
    <location>
        <begin position="169"/>
        <end position="185"/>
    </location>
</feature>
<proteinExistence type="evidence at protein level"/>
<name>CTSRZ_MOUSE</name>
<dbReference type="EMBL" id="AK005644">
    <property type="protein sequence ID" value="BAB24164.1"/>
    <property type="molecule type" value="mRNA"/>
</dbReference>
<dbReference type="EMBL" id="AK006034">
    <property type="protein sequence ID" value="BAB24375.1"/>
    <property type="molecule type" value="mRNA"/>
</dbReference>
<dbReference type="EMBL" id="AK006134">
    <property type="protein sequence ID" value="BAB24425.1"/>
    <property type="molecule type" value="mRNA"/>
</dbReference>
<dbReference type="EMBL" id="AK007089">
    <property type="protein sequence ID" value="BAB24857.1"/>
    <property type="molecule type" value="mRNA"/>
</dbReference>
<dbReference type="EMBL" id="BC048452">
    <property type="protein sequence ID" value="AAH48452.1"/>
    <property type="molecule type" value="mRNA"/>
</dbReference>
<dbReference type="EMBL" id="BC061075">
    <property type="protein sequence ID" value="AAH61075.1"/>
    <property type="molecule type" value="mRNA"/>
</dbReference>
<dbReference type="CCDS" id="CCDS29510.1"/>
<dbReference type="RefSeq" id="NP_001034583.1">
    <property type="nucleotide sequence ID" value="NM_001039494.2"/>
</dbReference>
<dbReference type="PDB" id="7EEB">
    <property type="method" value="EM"/>
    <property type="resolution" value="2.90 A"/>
    <property type="chains" value="K=1-194"/>
</dbReference>
<dbReference type="PDBsum" id="7EEB"/>
<dbReference type="EMDB" id="EMD-31076"/>
<dbReference type="SMR" id="Q9CQP8"/>
<dbReference type="ComplexPortal" id="CPX-9078">
    <property type="entry name" value="CatSpermasome complex, gamma subunit variant 2"/>
</dbReference>
<dbReference type="CORUM" id="Q9CQP8"/>
<dbReference type="FunCoup" id="Q9CQP8">
    <property type="interactions" value="12"/>
</dbReference>
<dbReference type="STRING" id="10090.ENSMUSP00000056681"/>
<dbReference type="iPTMnet" id="Q9CQP8"/>
<dbReference type="PhosphoSitePlus" id="Q9CQP8"/>
<dbReference type="SwissPalm" id="Q9CQP8"/>
<dbReference type="jPOST" id="Q9CQP8"/>
<dbReference type="PaxDb" id="10090-ENSMUSP00000056681"/>
<dbReference type="PeptideAtlas" id="Q9CQP8"/>
<dbReference type="ProteomicsDB" id="285229"/>
<dbReference type="Antibodypedia" id="66419">
    <property type="antibodies" value="34 antibodies from 11 providers"/>
</dbReference>
<dbReference type="DNASU" id="67077"/>
<dbReference type="Ensembl" id="ENSMUST00000057716.6">
    <property type="protein sequence ID" value="ENSMUSP00000056681.5"/>
    <property type="gene ID" value="ENSMUSG00000050623.6"/>
</dbReference>
<dbReference type="GeneID" id="67077"/>
<dbReference type="KEGG" id="mmu:67077"/>
<dbReference type="UCSC" id="uc008gji.1">
    <property type="organism name" value="mouse"/>
</dbReference>
<dbReference type="AGR" id="MGI:1914327"/>
<dbReference type="CTD" id="25858"/>
<dbReference type="MGI" id="MGI:1914327">
    <property type="gene designation" value="Catsperz"/>
</dbReference>
<dbReference type="VEuPathDB" id="HostDB:ENSMUSG00000050623"/>
<dbReference type="eggNOG" id="ENOG502RU31">
    <property type="taxonomic scope" value="Eukaryota"/>
</dbReference>
<dbReference type="GeneTree" id="ENSGT00400000022853"/>
<dbReference type="HOGENOM" id="CLU_123654_0_0_1"/>
<dbReference type="InParanoid" id="Q9CQP8"/>
<dbReference type="OMA" id="SHKPEEM"/>
<dbReference type="OrthoDB" id="9451709at2759"/>
<dbReference type="PhylomeDB" id="Q9CQP8"/>
<dbReference type="BioGRID-ORCS" id="67077">
    <property type="hits" value="1 hit in 76 CRISPR screens"/>
</dbReference>
<dbReference type="ChiTaRS" id="Kcnk4">
    <property type="organism name" value="mouse"/>
</dbReference>
<dbReference type="PRO" id="PR:Q9CQP8"/>
<dbReference type="Proteomes" id="UP000000589">
    <property type="component" value="Chromosome 19"/>
</dbReference>
<dbReference type="RNAct" id="Q9CQP8">
    <property type="molecule type" value="protein"/>
</dbReference>
<dbReference type="Bgee" id="ENSMUSG00000050623">
    <property type="expression patterns" value="Expressed in spermatocyte and 58 other cell types or tissues"/>
</dbReference>
<dbReference type="ExpressionAtlas" id="Q9CQP8">
    <property type="expression patterns" value="baseline and differential"/>
</dbReference>
<dbReference type="GO" id="GO:0036128">
    <property type="term" value="C:CatSper complex"/>
    <property type="evidence" value="ECO:0000314"/>
    <property type="project" value="UniProtKB"/>
</dbReference>
<dbReference type="GO" id="GO:0005737">
    <property type="term" value="C:cytoplasm"/>
    <property type="evidence" value="ECO:0000250"/>
    <property type="project" value="UniProtKB"/>
</dbReference>
<dbReference type="GO" id="GO:0097228">
    <property type="term" value="C:sperm principal piece"/>
    <property type="evidence" value="ECO:0000314"/>
    <property type="project" value="UniProtKB"/>
</dbReference>
<dbReference type="GO" id="GO:0030317">
    <property type="term" value="P:flagellated sperm motility"/>
    <property type="evidence" value="ECO:0000315"/>
    <property type="project" value="UniProtKB"/>
</dbReference>
<dbReference type="GO" id="GO:0007140">
    <property type="term" value="P:male meiotic nuclear division"/>
    <property type="evidence" value="ECO:0000270"/>
    <property type="project" value="UniProtKB"/>
</dbReference>
<dbReference type="GO" id="GO:0048240">
    <property type="term" value="P:sperm capacitation"/>
    <property type="evidence" value="ECO:0000314"/>
    <property type="project" value="UniProtKB"/>
</dbReference>
<dbReference type="GO" id="GO:0007283">
    <property type="term" value="P:spermatogenesis"/>
    <property type="evidence" value="ECO:0000315"/>
    <property type="project" value="UniProtKB"/>
</dbReference>
<dbReference type="InterPro" id="IPR039019">
    <property type="entry name" value="CATSPERZ"/>
</dbReference>
<dbReference type="PANTHER" id="PTHR42155:SF1">
    <property type="entry name" value="CATION CHANNEL SPERM-ASSOCIATED AUXILIARY SUBUNIT ZETA"/>
    <property type="match status" value="1"/>
</dbReference>
<dbReference type="PANTHER" id="PTHR42155">
    <property type="entry name" value="CATION CHANNEL SPERM-ASSOCIATED PROTEIN SUBUNIT ZETA"/>
    <property type="match status" value="1"/>
</dbReference>
<organism>
    <name type="scientific">Mus musculus</name>
    <name type="common">Mouse</name>
    <dbReference type="NCBI Taxonomy" id="10090"/>
    <lineage>
        <taxon>Eukaryota</taxon>
        <taxon>Metazoa</taxon>
        <taxon>Chordata</taxon>
        <taxon>Craniata</taxon>
        <taxon>Vertebrata</taxon>
        <taxon>Euteleostomi</taxon>
        <taxon>Mammalia</taxon>
        <taxon>Eutheria</taxon>
        <taxon>Euarchontoglires</taxon>
        <taxon>Glires</taxon>
        <taxon>Rodentia</taxon>
        <taxon>Myomorpha</taxon>
        <taxon>Muroidea</taxon>
        <taxon>Muridae</taxon>
        <taxon>Murinae</taxon>
        <taxon>Mus</taxon>
        <taxon>Mus</taxon>
    </lineage>
</organism>